<reference key="1">
    <citation type="submission" date="2006-12" db="EMBL/GenBank/DDBJ databases">
        <title>Complete sequence of Shewanella amazonensis SB2B.</title>
        <authorList>
            <consortium name="US DOE Joint Genome Institute"/>
            <person name="Copeland A."/>
            <person name="Lucas S."/>
            <person name="Lapidus A."/>
            <person name="Barry K."/>
            <person name="Detter J.C."/>
            <person name="Glavina del Rio T."/>
            <person name="Hammon N."/>
            <person name="Israni S."/>
            <person name="Dalin E."/>
            <person name="Tice H."/>
            <person name="Pitluck S."/>
            <person name="Munk A.C."/>
            <person name="Brettin T."/>
            <person name="Bruce D."/>
            <person name="Han C."/>
            <person name="Tapia R."/>
            <person name="Gilna P."/>
            <person name="Schmutz J."/>
            <person name="Larimer F."/>
            <person name="Land M."/>
            <person name="Hauser L."/>
            <person name="Kyrpides N."/>
            <person name="Mikhailova N."/>
            <person name="Fredrickson J."/>
            <person name="Richardson P."/>
        </authorList>
    </citation>
    <scope>NUCLEOTIDE SEQUENCE [LARGE SCALE GENOMIC DNA]</scope>
    <source>
        <strain>ATCC BAA-1098 / SB2B</strain>
    </source>
</reference>
<sequence length="271" mass="28590">MLKIAETEFGSRLFTGTGKFASGKLMQEAIAASGSELVTLAMKRVDFKTGSDDILAPLLSRGVRLLPNTSGARNAKEAIFAAELAREMLGTEWLKLEIHPDPKYLMPDPMETFAAAKELVSQGFKVLPYVHADPVLCRRLEEIGCAAVMPLGSPIGSNQGLVSREFLKIIIEQASIPVVVDAGIGAPSHACEAMELGADAVLVNTAIASSADPVRMARAFALAVQIGREAYLAGLGSKSLHAHETSPLTGFLNTGLSTTGLVDSGMAEKLL</sequence>
<protein>
    <recommendedName>
        <fullName evidence="1">Thiazole synthase</fullName>
        <ecNumber evidence="1">2.8.1.10</ecNumber>
    </recommendedName>
</protein>
<comment type="function">
    <text evidence="1">Catalyzes the rearrangement of 1-deoxy-D-xylulose 5-phosphate (DXP) to produce the thiazole phosphate moiety of thiamine. Sulfur is provided by the thiocarboxylate moiety of the carrier protein ThiS. In vitro, sulfur can be provided by H(2)S.</text>
</comment>
<comment type="catalytic activity">
    <reaction evidence="1">
        <text>[ThiS sulfur-carrier protein]-C-terminal-Gly-aminoethanethioate + 2-iminoacetate + 1-deoxy-D-xylulose 5-phosphate = [ThiS sulfur-carrier protein]-C-terminal Gly-Gly + 2-[(2R,5Z)-2-carboxy-4-methylthiazol-5(2H)-ylidene]ethyl phosphate + 2 H2O + H(+)</text>
        <dbReference type="Rhea" id="RHEA:26297"/>
        <dbReference type="Rhea" id="RHEA-COMP:12909"/>
        <dbReference type="Rhea" id="RHEA-COMP:19908"/>
        <dbReference type="ChEBI" id="CHEBI:15377"/>
        <dbReference type="ChEBI" id="CHEBI:15378"/>
        <dbReference type="ChEBI" id="CHEBI:57792"/>
        <dbReference type="ChEBI" id="CHEBI:62899"/>
        <dbReference type="ChEBI" id="CHEBI:77846"/>
        <dbReference type="ChEBI" id="CHEBI:90778"/>
        <dbReference type="ChEBI" id="CHEBI:232372"/>
        <dbReference type="EC" id="2.8.1.10"/>
    </reaction>
</comment>
<comment type="pathway">
    <text evidence="1">Cofactor biosynthesis; thiamine diphosphate biosynthesis.</text>
</comment>
<comment type="subunit">
    <text evidence="1">Homotetramer. Forms heterodimers with either ThiH or ThiS.</text>
</comment>
<comment type="subcellular location">
    <subcellularLocation>
        <location evidence="1">Cytoplasm</location>
    </subcellularLocation>
</comment>
<comment type="similarity">
    <text evidence="1">Belongs to the ThiG family.</text>
</comment>
<evidence type="ECO:0000255" key="1">
    <source>
        <dbReference type="HAMAP-Rule" id="MF_00443"/>
    </source>
</evidence>
<dbReference type="EC" id="2.8.1.10" evidence="1"/>
<dbReference type="EMBL" id="CP000507">
    <property type="protein sequence ID" value="ABM00062.1"/>
    <property type="molecule type" value="Genomic_DNA"/>
</dbReference>
<dbReference type="RefSeq" id="WP_011759969.1">
    <property type="nucleotide sequence ID" value="NC_008700.1"/>
</dbReference>
<dbReference type="SMR" id="A1S6Q5"/>
<dbReference type="STRING" id="326297.Sama_1856"/>
<dbReference type="KEGG" id="saz:Sama_1856"/>
<dbReference type="eggNOG" id="COG2022">
    <property type="taxonomic scope" value="Bacteria"/>
</dbReference>
<dbReference type="HOGENOM" id="CLU_062233_1_0_6"/>
<dbReference type="OrthoDB" id="9805935at2"/>
<dbReference type="UniPathway" id="UPA00060"/>
<dbReference type="Proteomes" id="UP000009175">
    <property type="component" value="Chromosome"/>
</dbReference>
<dbReference type="GO" id="GO:0005737">
    <property type="term" value="C:cytoplasm"/>
    <property type="evidence" value="ECO:0007669"/>
    <property type="project" value="UniProtKB-SubCell"/>
</dbReference>
<dbReference type="GO" id="GO:1990107">
    <property type="term" value="F:thiazole synthase activity"/>
    <property type="evidence" value="ECO:0007669"/>
    <property type="project" value="UniProtKB-EC"/>
</dbReference>
<dbReference type="GO" id="GO:0009229">
    <property type="term" value="P:thiamine diphosphate biosynthetic process"/>
    <property type="evidence" value="ECO:0007669"/>
    <property type="project" value="UniProtKB-UniRule"/>
</dbReference>
<dbReference type="CDD" id="cd04728">
    <property type="entry name" value="ThiG"/>
    <property type="match status" value="1"/>
</dbReference>
<dbReference type="FunFam" id="3.20.20.70:FF:000049">
    <property type="entry name" value="Thiazole synthase"/>
    <property type="match status" value="1"/>
</dbReference>
<dbReference type="Gene3D" id="3.20.20.70">
    <property type="entry name" value="Aldolase class I"/>
    <property type="match status" value="1"/>
</dbReference>
<dbReference type="HAMAP" id="MF_00443">
    <property type="entry name" value="ThiG"/>
    <property type="match status" value="1"/>
</dbReference>
<dbReference type="InterPro" id="IPR013785">
    <property type="entry name" value="Aldolase_TIM"/>
</dbReference>
<dbReference type="InterPro" id="IPR033983">
    <property type="entry name" value="Thiazole_synthase_ThiG"/>
</dbReference>
<dbReference type="InterPro" id="IPR008867">
    <property type="entry name" value="ThiG"/>
</dbReference>
<dbReference type="PANTHER" id="PTHR34266">
    <property type="entry name" value="THIAZOLE SYNTHASE"/>
    <property type="match status" value="1"/>
</dbReference>
<dbReference type="PANTHER" id="PTHR34266:SF2">
    <property type="entry name" value="THIAZOLE SYNTHASE"/>
    <property type="match status" value="1"/>
</dbReference>
<dbReference type="Pfam" id="PF05690">
    <property type="entry name" value="ThiG"/>
    <property type="match status" value="1"/>
</dbReference>
<dbReference type="SUPFAM" id="SSF110399">
    <property type="entry name" value="ThiG-like"/>
    <property type="match status" value="1"/>
</dbReference>
<organism>
    <name type="scientific">Shewanella amazonensis (strain ATCC BAA-1098 / SB2B)</name>
    <dbReference type="NCBI Taxonomy" id="326297"/>
    <lineage>
        <taxon>Bacteria</taxon>
        <taxon>Pseudomonadati</taxon>
        <taxon>Pseudomonadota</taxon>
        <taxon>Gammaproteobacteria</taxon>
        <taxon>Alteromonadales</taxon>
        <taxon>Shewanellaceae</taxon>
        <taxon>Shewanella</taxon>
    </lineage>
</organism>
<proteinExistence type="inferred from homology"/>
<keyword id="KW-0963">Cytoplasm</keyword>
<keyword id="KW-1185">Reference proteome</keyword>
<keyword id="KW-0704">Schiff base</keyword>
<keyword id="KW-0784">Thiamine biosynthesis</keyword>
<keyword id="KW-0808">Transferase</keyword>
<accession>A1S6Q5</accession>
<feature type="chain" id="PRO_1000026039" description="Thiazole synthase">
    <location>
        <begin position="1"/>
        <end position="271"/>
    </location>
</feature>
<feature type="active site" description="Schiff-base intermediate with DXP" evidence="1">
    <location>
        <position position="95"/>
    </location>
</feature>
<feature type="binding site" evidence="1">
    <location>
        <position position="156"/>
    </location>
    <ligand>
        <name>1-deoxy-D-xylulose 5-phosphate</name>
        <dbReference type="ChEBI" id="CHEBI:57792"/>
    </ligand>
</feature>
<feature type="binding site" evidence="1">
    <location>
        <begin position="182"/>
        <end position="183"/>
    </location>
    <ligand>
        <name>1-deoxy-D-xylulose 5-phosphate</name>
        <dbReference type="ChEBI" id="CHEBI:57792"/>
    </ligand>
</feature>
<feature type="binding site" evidence="1">
    <location>
        <begin position="204"/>
        <end position="205"/>
    </location>
    <ligand>
        <name>1-deoxy-D-xylulose 5-phosphate</name>
        <dbReference type="ChEBI" id="CHEBI:57792"/>
    </ligand>
</feature>
<gene>
    <name evidence="1" type="primary">thiG</name>
    <name type="ordered locus">Sama_1856</name>
</gene>
<name>THIG_SHEAM</name>